<sequence>MATPLSQVRQNYHQDCEAAVNRQINLELYASYVYLSMSYYFDRDDVALKNFAKYFLHQSHEEREHAEKLMKLQNQRGGRIFLQDIKKPDRDDWENGLTAMECALHLEKNVNQSLLELHKLATEKNDPHLCDFIETHYLDEQVKAIKELGDHVTNLRKMGAPKYGMAEYLFDKHTLGHSDES</sequence>
<name>FRIH_ANAPL</name>
<evidence type="ECO:0000250" key="1">
    <source>
        <dbReference type="UniProtKB" id="P02794"/>
    </source>
</evidence>
<evidence type="ECO:0000250" key="2">
    <source>
        <dbReference type="UniProtKB" id="P19130"/>
    </source>
</evidence>
<evidence type="ECO:0000255" key="3">
    <source>
        <dbReference type="PROSITE-ProRule" id="PRU00085"/>
    </source>
</evidence>
<evidence type="ECO:0000269" key="4">
    <source>
    </source>
</evidence>
<evidence type="ECO:0000269" key="5">
    <source>
    </source>
</evidence>
<evidence type="ECO:0000303" key="6">
    <source>
    </source>
</evidence>
<evidence type="ECO:0000303" key="7">
    <source>
    </source>
</evidence>
<evidence type="ECO:0000305" key="8"/>
<evidence type="ECO:0000312" key="9">
    <source>
        <dbReference type="EMBL" id="AGD91914.1"/>
    </source>
</evidence>
<proteinExistence type="evidence at protein level"/>
<gene>
    <name evidence="7" type="primary">FTH1</name>
</gene>
<comment type="function">
    <text evidence="1">Stores iron in a soluble, non-toxic, readily available form. Important for iron homeostasis. Has ferroxidase activity. Iron is taken up in the ferrous form and deposited as ferric hydroxides after oxidation. Also plays a role in delivery of iron to cells. Mediates iron uptake in capsule cells of the developing kidney. Delivery to lysosomes is mediated by the cargo receptor NCOA4 for autophagic degradation and release of iron (By similarity).</text>
</comment>
<comment type="function">
    <text evidence="4">Inhibits translation of various mRNA species in vitro. Associates with a 35S prosome-like particle that contains non-translated mRNAs in a complex with proteins. May be involved in pre-translational regulation of some mRNA.</text>
</comment>
<comment type="catalytic activity">
    <reaction evidence="1">
        <text>4 Fe(2+) + O2 + 4 H(+) = 4 Fe(3+) + 2 H2O</text>
        <dbReference type="Rhea" id="RHEA:11148"/>
        <dbReference type="ChEBI" id="CHEBI:15377"/>
        <dbReference type="ChEBI" id="CHEBI:15378"/>
        <dbReference type="ChEBI" id="CHEBI:15379"/>
        <dbReference type="ChEBI" id="CHEBI:29033"/>
        <dbReference type="ChEBI" id="CHEBI:29034"/>
        <dbReference type="EC" id="1.16.3.1"/>
    </reaction>
</comment>
<comment type="subunit">
    <text evidence="1">Oligomer of 24 subunits. There are two types of subunits: L (light) chain and H (heavy) chain. The major chain can be light or heavy, depending on the species and tissue type. The functional molecule forms a roughly spherical shell with a diameter of 12 nm and contains a central cavity into which the insoluble mineral iron core is deposited.</text>
</comment>
<comment type="subcellular location">
    <subcellularLocation>
        <location evidence="2">Cytoplasm</location>
    </subcellularLocation>
    <subcellularLocation>
        <location evidence="1">Lysosome</location>
    </subcellularLocation>
    <subcellularLocation>
        <location evidence="1">Cytoplasmic vesicle</location>
        <location evidence="1">Autophagosome</location>
    </subcellularLocation>
</comment>
<comment type="tissue specificity">
    <text evidence="4 5">Expressed in erythroblasts (at protein level) (PubMed:1499559). Expressed in heart, liver, spleen, lung, kidney, large intestine, small intestine, muscle, glandular stomach, ovary and oviduct (PubMed:24981929).</text>
</comment>
<comment type="induction">
    <text evidence="4 5">By duck hepatitis virus type I (DHV-1) (PubMed:24981929). By polyinosinic:polycytidylic acid (poly I:C) which mimicks viral double-stranded RNA (PubMed:1499559).</text>
</comment>
<comment type="similarity">
    <text evidence="8">Belongs to the ferritin family.</text>
</comment>
<dbReference type="EC" id="1.16.3.1" evidence="1"/>
<dbReference type="EMBL" id="KC117386">
    <property type="protein sequence ID" value="AGD91914.1"/>
    <property type="molecule type" value="mRNA"/>
</dbReference>
<dbReference type="PIR" id="S24135">
    <property type="entry name" value="S24135"/>
</dbReference>
<dbReference type="RefSeq" id="NP_001297306.1">
    <property type="nucleotide sequence ID" value="NM_001310377.1"/>
</dbReference>
<dbReference type="SMR" id="P80145"/>
<dbReference type="Ensembl" id="ENSAPLT00020007285.1">
    <property type="protein sequence ID" value="ENSAPLP00020006780.1"/>
    <property type="gene ID" value="ENSAPLG00020004941.1"/>
</dbReference>
<dbReference type="GeneID" id="101798267"/>
<dbReference type="KEGG" id="apla:101798267"/>
<dbReference type="CTD" id="2495"/>
<dbReference type="OrthoDB" id="186462at2759"/>
<dbReference type="Proteomes" id="UP000694400">
    <property type="component" value="Chromosome 5"/>
</dbReference>
<dbReference type="GO" id="GO:0005776">
    <property type="term" value="C:autophagosome"/>
    <property type="evidence" value="ECO:0007669"/>
    <property type="project" value="UniProtKB-SubCell"/>
</dbReference>
<dbReference type="GO" id="GO:0031410">
    <property type="term" value="C:cytoplasmic vesicle"/>
    <property type="evidence" value="ECO:0007669"/>
    <property type="project" value="UniProtKB-KW"/>
</dbReference>
<dbReference type="GO" id="GO:0005764">
    <property type="term" value="C:lysosome"/>
    <property type="evidence" value="ECO:0007669"/>
    <property type="project" value="UniProtKB-SubCell"/>
</dbReference>
<dbReference type="GO" id="GO:0008199">
    <property type="term" value="F:ferric iron binding"/>
    <property type="evidence" value="ECO:0007669"/>
    <property type="project" value="InterPro"/>
</dbReference>
<dbReference type="GO" id="GO:0008198">
    <property type="term" value="F:ferrous iron binding"/>
    <property type="evidence" value="ECO:0007669"/>
    <property type="project" value="TreeGrafter"/>
</dbReference>
<dbReference type="GO" id="GO:0004322">
    <property type="term" value="F:ferroxidase activity"/>
    <property type="evidence" value="ECO:0007669"/>
    <property type="project" value="UniProtKB-EC"/>
</dbReference>
<dbReference type="GO" id="GO:0003723">
    <property type="term" value="F:RNA binding"/>
    <property type="evidence" value="ECO:0007669"/>
    <property type="project" value="UniProtKB-KW"/>
</dbReference>
<dbReference type="GO" id="GO:0006879">
    <property type="term" value="P:intracellular iron ion homeostasis"/>
    <property type="evidence" value="ECO:0007669"/>
    <property type="project" value="UniProtKB-KW"/>
</dbReference>
<dbReference type="GO" id="GO:0006826">
    <property type="term" value="P:iron ion transport"/>
    <property type="evidence" value="ECO:0007669"/>
    <property type="project" value="InterPro"/>
</dbReference>
<dbReference type="GO" id="GO:0110076">
    <property type="term" value="P:negative regulation of ferroptosis"/>
    <property type="evidence" value="ECO:0000250"/>
    <property type="project" value="UniProtKB"/>
</dbReference>
<dbReference type="CDD" id="cd01056">
    <property type="entry name" value="Euk_Ferritin"/>
    <property type="match status" value="1"/>
</dbReference>
<dbReference type="FunFam" id="1.20.1260.10:FF:000024">
    <property type="entry name" value="Ferritin heavy chain"/>
    <property type="match status" value="1"/>
</dbReference>
<dbReference type="Gene3D" id="1.20.1260.10">
    <property type="match status" value="1"/>
</dbReference>
<dbReference type="InterPro" id="IPR001519">
    <property type="entry name" value="Ferritin"/>
</dbReference>
<dbReference type="InterPro" id="IPR012347">
    <property type="entry name" value="Ferritin-like"/>
</dbReference>
<dbReference type="InterPro" id="IPR009040">
    <property type="entry name" value="Ferritin-like_diiron"/>
</dbReference>
<dbReference type="InterPro" id="IPR009078">
    <property type="entry name" value="Ferritin-like_SF"/>
</dbReference>
<dbReference type="InterPro" id="IPR014034">
    <property type="entry name" value="Ferritin_CS"/>
</dbReference>
<dbReference type="InterPro" id="IPR008331">
    <property type="entry name" value="Ferritin_DPS_dom"/>
</dbReference>
<dbReference type="PANTHER" id="PTHR11431">
    <property type="entry name" value="FERRITIN"/>
    <property type="match status" value="1"/>
</dbReference>
<dbReference type="PANTHER" id="PTHR11431:SF37">
    <property type="entry name" value="FERRITIN HEAVY CHAIN"/>
    <property type="match status" value="1"/>
</dbReference>
<dbReference type="Pfam" id="PF00210">
    <property type="entry name" value="Ferritin"/>
    <property type="match status" value="1"/>
</dbReference>
<dbReference type="SUPFAM" id="SSF47240">
    <property type="entry name" value="Ferritin-like"/>
    <property type="match status" value="1"/>
</dbReference>
<reference evidence="9" key="1">
    <citation type="journal article" date="2014" name="Mol. Biol. Rep.">
        <title>Molecular cloning and expression analysis of ferritin, heavy polypeptide 1 gene from duck (Anas platyrhynchos).</title>
        <authorList>
            <person name="Xu Q."/>
            <person name="Chen Y."/>
            <person name="Zhang Y."/>
            <person name="Tong Y.Y."/>
            <person name="Huang Z.Y."/>
            <person name="Zhao W.M."/>
            <person name="Duan X.J."/>
            <person name="Li X."/>
            <person name="Chang G.B."/>
            <person name="Chen G.H."/>
        </authorList>
    </citation>
    <scope>NUCLEOTIDE SEQUENCE [MRNA]</scope>
    <scope>TISSUE SPECIFICITY</scope>
    <scope>INDUCTION</scope>
</reference>
<reference key="2">
    <citation type="journal article" date="1992" name="Eur. J. Biochem.">
        <title>The protein of M(r) 21,000 constituting the prosome-like particle of duck erythroblasts is homologous to apoferritin.</title>
        <authorList>
            <person name="Coux O."/>
            <person name="Camoin L."/>
            <person name="Nothwang H.-G."/>
            <person name="Bey F."/>
            <person name="Silva-Pereira I."/>
            <person name="Keith G."/>
            <person name="Strosberg A.-D."/>
            <person name="Scherrer K."/>
        </authorList>
    </citation>
    <scope>PROTEIN SEQUENCE OF 109-118 AND 159-181</scope>
    <scope>TISSUE SPECIFICITY</scope>
    <source>
        <tissue>Erythroblast</tissue>
    </source>
</reference>
<keyword id="KW-0963">Cytoplasm</keyword>
<keyword id="KW-0968">Cytoplasmic vesicle</keyword>
<keyword id="KW-0903">Direct protein sequencing</keyword>
<keyword id="KW-0408">Iron</keyword>
<keyword id="KW-0409">Iron storage</keyword>
<keyword id="KW-0458">Lysosome</keyword>
<keyword id="KW-0479">Metal-binding</keyword>
<keyword id="KW-0560">Oxidoreductase</keyword>
<keyword id="KW-0694">RNA-binding</keyword>
<accession>P80145</accession>
<accession>L7XWS8</accession>
<protein>
    <recommendedName>
        <fullName evidence="7">Ferritin heavy chain</fullName>
        <shortName>Ferritin H subunit</shortName>
        <ecNumber evidence="1">1.16.3.1</ecNumber>
    </recommendedName>
    <alternativeName>
        <fullName evidence="6">Prosome-like particle</fullName>
        <shortName evidence="6">PLP</shortName>
    </alternativeName>
    <alternativeName>
        <fullName evidence="6">RNP particle</fullName>
    </alternativeName>
</protein>
<organism>
    <name type="scientific">Anas platyrhynchos</name>
    <name type="common">Mallard</name>
    <name type="synonym">Anas boschas</name>
    <dbReference type="NCBI Taxonomy" id="8839"/>
    <lineage>
        <taxon>Eukaryota</taxon>
        <taxon>Metazoa</taxon>
        <taxon>Chordata</taxon>
        <taxon>Craniata</taxon>
        <taxon>Vertebrata</taxon>
        <taxon>Euteleostomi</taxon>
        <taxon>Archelosauria</taxon>
        <taxon>Archosauria</taxon>
        <taxon>Dinosauria</taxon>
        <taxon>Saurischia</taxon>
        <taxon>Theropoda</taxon>
        <taxon>Coelurosauria</taxon>
        <taxon>Aves</taxon>
        <taxon>Neognathae</taxon>
        <taxon>Galloanserae</taxon>
        <taxon>Anseriformes</taxon>
        <taxon>Anatidae</taxon>
        <taxon>Anatinae</taxon>
        <taxon>Anas</taxon>
    </lineage>
</organism>
<feature type="chain" id="PRO_0000201056" description="Ferritin heavy chain">
    <location>
        <begin position="1"/>
        <end position="181"/>
    </location>
</feature>
<feature type="domain" description="Ferritin-like diiron" evidence="3">
    <location>
        <begin position="10"/>
        <end position="159"/>
    </location>
</feature>
<feature type="binding site" evidence="3">
    <location>
        <position position="27"/>
    </location>
    <ligand>
        <name>Fe cation</name>
        <dbReference type="ChEBI" id="CHEBI:24875"/>
        <label>1</label>
    </ligand>
</feature>
<feature type="binding site" evidence="3">
    <location>
        <position position="62"/>
    </location>
    <ligand>
        <name>Fe cation</name>
        <dbReference type="ChEBI" id="CHEBI:24875"/>
        <label>1</label>
    </ligand>
</feature>
<feature type="binding site" evidence="3">
    <location>
        <position position="62"/>
    </location>
    <ligand>
        <name>Fe cation</name>
        <dbReference type="ChEBI" id="CHEBI:24875"/>
        <label>2</label>
    </ligand>
</feature>
<feature type="binding site" evidence="3">
    <location>
        <position position="65"/>
    </location>
    <ligand>
        <name>Fe cation</name>
        <dbReference type="ChEBI" id="CHEBI:24875"/>
        <label>1</label>
    </ligand>
</feature>
<feature type="binding site" evidence="3">
    <location>
        <position position="107"/>
    </location>
    <ligand>
        <name>Fe cation</name>
        <dbReference type="ChEBI" id="CHEBI:24875"/>
        <label>2</label>
    </ligand>
</feature>
<feature type="binding site" evidence="3">
    <location>
        <position position="141"/>
    </location>
    <ligand>
        <name>Fe cation</name>
        <dbReference type="ChEBI" id="CHEBI:24875"/>
        <label>2</label>
    </ligand>
</feature>
<feature type="sequence conflict" description="In Ref. 2; AA sequence." evidence="8" ref="2">
    <original>ES</original>
    <variation>N</variation>
    <location>
        <begin position="180"/>
        <end position="181"/>
    </location>
</feature>